<accession>Q7NFW7</accession>
<proteinExistence type="inferred from homology"/>
<organism>
    <name type="scientific">Gloeobacter violaceus (strain ATCC 29082 / PCC 7421)</name>
    <dbReference type="NCBI Taxonomy" id="251221"/>
    <lineage>
        <taxon>Bacteria</taxon>
        <taxon>Bacillati</taxon>
        <taxon>Cyanobacteriota</taxon>
        <taxon>Cyanophyceae</taxon>
        <taxon>Gloeobacterales</taxon>
        <taxon>Gloeobacteraceae</taxon>
        <taxon>Gloeobacter</taxon>
    </lineage>
</organism>
<evidence type="ECO:0000250" key="1"/>
<evidence type="ECO:0000255" key="2">
    <source>
        <dbReference type="HAMAP-Rule" id="MF_00103"/>
    </source>
</evidence>
<sequence length="284" mass="31344">MPELPEVETLRRDLLIHLPGERVVGVEVLRSDSVGYPADPAIFIEQMQGQIFSDRMLRRGKYLLLYFARGAALGVHLRMSGRLLWRCGEAPLEPHTRVRIPMASGHELRFEDMRVFGRLWLIPVGVPPERVMGGLTRLGPEPFAEMFDGPYLAGRFAGRNQPVKSALLDQQLVAGVGNIYADEALFSSGIHPALPVGGLDAAALERLHRAVVKVLEAGIAQRGATLRNYTDAQGINGNYAGTAWVYGRKGQPCRVCNTPIERIRLAGRSTHFCPTCQRAQQSVQ</sequence>
<name>FPG_GLOVI</name>
<dbReference type="EC" id="3.2.2.23" evidence="2"/>
<dbReference type="EC" id="4.2.99.18" evidence="2"/>
<dbReference type="EMBL" id="BA000045">
    <property type="protein sequence ID" value="BAC91348.1"/>
    <property type="molecule type" value="Genomic_DNA"/>
</dbReference>
<dbReference type="RefSeq" id="NP_926353.1">
    <property type="nucleotide sequence ID" value="NC_005125.1"/>
</dbReference>
<dbReference type="RefSeq" id="WP_011143396.1">
    <property type="nucleotide sequence ID" value="NC_005125.1"/>
</dbReference>
<dbReference type="SMR" id="Q7NFW7"/>
<dbReference type="FunCoup" id="Q7NFW7">
    <property type="interactions" value="71"/>
</dbReference>
<dbReference type="STRING" id="251221.gene:10760919"/>
<dbReference type="EnsemblBacteria" id="BAC91348">
    <property type="protein sequence ID" value="BAC91348"/>
    <property type="gene ID" value="BAC91348"/>
</dbReference>
<dbReference type="KEGG" id="gvi:gll3407"/>
<dbReference type="PATRIC" id="fig|251221.4.peg.3443"/>
<dbReference type="eggNOG" id="COG0266">
    <property type="taxonomic scope" value="Bacteria"/>
</dbReference>
<dbReference type="HOGENOM" id="CLU_038423_1_2_3"/>
<dbReference type="InParanoid" id="Q7NFW7"/>
<dbReference type="OrthoDB" id="9800855at2"/>
<dbReference type="PhylomeDB" id="Q7NFW7"/>
<dbReference type="Proteomes" id="UP000000557">
    <property type="component" value="Chromosome"/>
</dbReference>
<dbReference type="GO" id="GO:0034039">
    <property type="term" value="F:8-oxo-7,8-dihydroguanine DNA N-glycosylase activity"/>
    <property type="evidence" value="ECO:0000318"/>
    <property type="project" value="GO_Central"/>
</dbReference>
<dbReference type="GO" id="GO:0140078">
    <property type="term" value="F:class I DNA-(apurinic or apyrimidinic site) endonuclease activity"/>
    <property type="evidence" value="ECO:0007669"/>
    <property type="project" value="UniProtKB-EC"/>
</dbReference>
<dbReference type="GO" id="GO:0003684">
    <property type="term" value="F:damaged DNA binding"/>
    <property type="evidence" value="ECO:0007669"/>
    <property type="project" value="InterPro"/>
</dbReference>
<dbReference type="GO" id="GO:0003906">
    <property type="term" value="F:DNA-(apurinic or apyrimidinic site) endonuclease activity"/>
    <property type="evidence" value="ECO:0000318"/>
    <property type="project" value="GO_Central"/>
</dbReference>
<dbReference type="GO" id="GO:0008270">
    <property type="term" value="F:zinc ion binding"/>
    <property type="evidence" value="ECO:0007669"/>
    <property type="project" value="UniProtKB-UniRule"/>
</dbReference>
<dbReference type="GO" id="GO:0006284">
    <property type="term" value="P:base-excision repair"/>
    <property type="evidence" value="ECO:0000318"/>
    <property type="project" value="GO_Central"/>
</dbReference>
<dbReference type="CDD" id="cd08966">
    <property type="entry name" value="EcFpg-like_N"/>
    <property type="match status" value="1"/>
</dbReference>
<dbReference type="FunFam" id="1.10.8.50:FF:000003">
    <property type="entry name" value="Formamidopyrimidine-DNA glycosylase"/>
    <property type="match status" value="1"/>
</dbReference>
<dbReference type="Gene3D" id="1.10.8.50">
    <property type="match status" value="1"/>
</dbReference>
<dbReference type="Gene3D" id="3.20.190.10">
    <property type="entry name" value="MutM-like, N-terminal"/>
    <property type="match status" value="1"/>
</dbReference>
<dbReference type="HAMAP" id="MF_00103">
    <property type="entry name" value="Fapy_DNA_glycosyl"/>
    <property type="match status" value="1"/>
</dbReference>
<dbReference type="InterPro" id="IPR015886">
    <property type="entry name" value="DNA_glyclase/AP_lyase_DNA-bd"/>
</dbReference>
<dbReference type="InterPro" id="IPR015887">
    <property type="entry name" value="DNA_glyclase_Znf_dom_DNA_BS"/>
</dbReference>
<dbReference type="InterPro" id="IPR020629">
    <property type="entry name" value="Formamido-pyr_DNA_Glyclase"/>
</dbReference>
<dbReference type="InterPro" id="IPR012319">
    <property type="entry name" value="FPG_cat"/>
</dbReference>
<dbReference type="InterPro" id="IPR035937">
    <property type="entry name" value="MutM-like_N-ter"/>
</dbReference>
<dbReference type="InterPro" id="IPR010979">
    <property type="entry name" value="Ribosomal_uS13-like_H2TH"/>
</dbReference>
<dbReference type="InterPro" id="IPR000214">
    <property type="entry name" value="Znf_DNA_glyclase/AP_lyase"/>
</dbReference>
<dbReference type="InterPro" id="IPR010663">
    <property type="entry name" value="Znf_FPG/IleRS"/>
</dbReference>
<dbReference type="NCBIfam" id="TIGR00577">
    <property type="entry name" value="fpg"/>
    <property type="match status" value="1"/>
</dbReference>
<dbReference type="NCBIfam" id="NF002211">
    <property type="entry name" value="PRK01103.1"/>
    <property type="match status" value="1"/>
</dbReference>
<dbReference type="PANTHER" id="PTHR22993">
    <property type="entry name" value="FORMAMIDOPYRIMIDINE-DNA GLYCOSYLASE"/>
    <property type="match status" value="1"/>
</dbReference>
<dbReference type="PANTHER" id="PTHR22993:SF9">
    <property type="entry name" value="FORMAMIDOPYRIMIDINE-DNA GLYCOSYLASE"/>
    <property type="match status" value="1"/>
</dbReference>
<dbReference type="Pfam" id="PF01149">
    <property type="entry name" value="Fapy_DNA_glyco"/>
    <property type="match status" value="1"/>
</dbReference>
<dbReference type="Pfam" id="PF06831">
    <property type="entry name" value="H2TH"/>
    <property type="match status" value="1"/>
</dbReference>
<dbReference type="Pfam" id="PF06827">
    <property type="entry name" value="zf-FPG_IleRS"/>
    <property type="match status" value="1"/>
</dbReference>
<dbReference type="SMART" id="SM00898">
    <property type="entry name" value="Fapy_DNA_glyco"/>
    <property type="match status" value="1"/>
</dbReference>
<dbReference type="SMART" id="SM01232">
    <property type="entry name" value="H2TH"/>
    <property type="match status" value="1"/>
</dbReference>
<dbReference type="SUPFAM" id="SSF57716">
    <property type="entry name" value="Glucocorticoid receptor-like (DNA-binding domain)"/>
    <property type="match status" value="1"/>
</dbReference>
<dbReference type="SUPFAM" id="SSF81624">
    <property type="entry name" value="N-terminal domain of MutM-like DNA repair proteins"/>
    <property type="match status" value="1"/>
</dbReference>
<dbReference type="SUPFAM" id="SSF46946">
    <property type="entry name" value="S13-like H2TH domain"/>
    <property type="match status" value="1"/>
</dbReference>
<dbReference type="PROSITE" id="PS51068">
    <property type="entry name" value="FPG_CAT"/>
    <property type="match status" value="1"/>
</dbReference>
<dbReference type="PROSITE" id="PS01242">
    <property type="entry name" value="ZF_FPG_1"/>
    <property type="match status" value="1"/>
</dbReference>
<dbReference type="PROSITE" id="PS51066">
    <property type="entry name" value="ZF_FPG_2"/>
    <property type="match status" value="1"/>
</dbReference>
<comment type="function">
    <text evidence="2">Involved in base excision repair of DNA damaged by oxidation or by mutagenic agents. Acts as a DNA glycosylase that recognizes and removes damaged bases. Has a preference for oxidized purines, such as 7,8-dihydro-8-oxoguanine (8-oxoG). Has AP (apurinic/apyrimidinic) lyase activity and introduces nicks in the DNA strand. Cleaves the DNA backbone by beta-delta elimination to generate a single-strand break at the site of the removed base with both 3'- and 5'-phosphates.</text>
</comment>
<comment type="catalytic activity">
    <reaction evidence="2">
        <text>Hydrolysis of DNA containing ring-opened 7-methylguanine residues, releasing 2,6-diamino-4-hydroxy-5-(N-methyl)formamidopyrimidine.</text>
        <dbReference type="EC" id="3.2.2.23"/>
    </reaction>
</comment>
<comment type="catalytic activity">
    <reaction evidence="2">
        <text>2'-deoxyribonucleotide-(2'-deoxyribose 5'-phosphate)-2'-deoxyribonucleotide-DNA = a 3'-end 2'-deoxyribonucleotide-(2,3-dehydro-2,3-deoxyribose 5'-phosphate)-DNA + a 5'-end 5'-phospho-2'-deoxyribonucleoside-DNA + H(+)</text>
        <dbReference type="Rhea" id="RHEA:66592"/>
        <dbReference type="Rhea" id="RHEA-COMP:13180"/>
        <dbReference type="Rhea" id="RHEA-COMP:16897"/>
        <dbReference type="Rhea" id="RHEA-COMP:17067"/>
        <dbReference type="ChEBI" id="CHEBI:15378"/>
        <dbReference type="ChEBI" id="CHEBI:136412"/>
        <dbReference type="ChEBI" id="CHEBI:157695"/>
        <dbReference type="ChEBI" id="CHEBI:167181"/>
        <dbReference type="EC" id="4.2.99.18"/>
    </reaction>
</comment>
<comment type="cofactor">
    <cofactor evidence="2">
        <name>Zn(2+)</name>
        <dbReference type="ChEBI" id="CHEBI:29105"/>
    </cofactor>
    <text evidence="2">Binds 1 zinc ion per subunit.</text>
</comment>
<comment type="subunit">
    <text evidence="2">Monomer.</text>
</comment>
<comment type="similarity">
    <text evidence="2">Belongs to the FPG family.</text>
</comment>
<protein>
    <recommendedName>
        <fullName evidence="2">Formamidopyrimidine-DNA glycosylase</fullName>
        <shortName evidence="2">Fapy-DNA glycosylase</shortName>
        <ecNumber evidence="2">3.2.2.23</ecNumber>
    </recommendedName>
    <alternativeName>
        <fullName evidence="2">DNA-(apurinic or apyrimidinic site) lyase MutM</fullName>
        <shortName evidence="2">AP lyase MutM</shortName>
        <ecNumber evidence="2">4.2.99.18</ecNumber>
    </alternativeName>
</protein>
<keyword id="KW-0227">DNA damage</keyword>
<keyword id="KW-0234">DNA repair</keyword>
<keyword id="KW-0238">DNA-binding</keyword>
<keyword id="KW-0326">Glycosidase</keyword>
<keyword id="KW-0378">Hydrolase</keyword>
<keyword id="KW-0456">Lyase</keyword>
<keyword id="KW-0479">Metal-binding</keyword>
<keyword id="KW-0511">Multifunctional enzyme</keyword>
<keyword id="KW-1185">Reference proteome</keyword>
<keyword id="KW-0862">Zinc</keyword>
<keyword id="KW-0863">Zinc-finger</keyword>
<gene>
    <name evidence="2" type="primary">mutM</name>
    <name evidence="2" type="synonym">fpg</name>
    <name type="ordered locus">gll3407</name>
</gene>
<feature type="initiator methionine" description="Removed" evidence="1">
    <location>
        <position position="1"/>
    </location>
</feature>
<feature type="chain" id="PRO_0000170826" description="Formamidopyrimidine-DNA glycosylase">
    <location>
        <begin position="2"/>
        <end position="284"/>
    </location>
</feature>
<feature type="zinc finger region" description="FPG-type" evidence="2">
    <location>
        <begin position="244"/>
        <end position="278"/>
    </location>
</feature>
<feature type="active site" description="Schiff-base intermediate with DNA" evidence="2">
    <location>
        <position position="2"/>
    </location>
</feature>
<feature type="active site" description="Proton donor" evidence="2">
    <location>
        <position position="3"/>
    </location>
</feature>
<feature type="active site" description="Proton donor; for beta-elimination activity" evidence="2">
    <location>
        <position position="61"/>
    </location>
</feature>
<feature type="active site" description="Proton donor; for delta-elimination activity" evidence="2">
    <location>
        <position position="268"/>
    </location>
</feature>
<feature type="binding site" evidence="2">
    <location>
        <position position="95"/>
    </location>
    <ligand>
        <name>DNA</name>
        <dbReference type="ChEBI" id="CHEBI:16991"/>
    </ligand>
</feature>
<feature type="binding site" evidence="2">
    <location>
        <position position="114"/>
    </location>
    <ligand>
        <name>DNA</name>
        <dbReference type="ChEBI" id="CHEBI:16991"/>
    </ligand>
</feature>
<feature type="binding site" evidence="2">
    <location>
        <position position="159"/>
    </location>
    <ligand>
        <name>DNA</name>
        <dbReference type="ChEBI" id="CHEBI:16991"/>
    </ligand>
</feature>
<reference key="1">
    <citation type="journal article" date="2003" name="DNA Res.">
        <title>Complete genome structure of Gloeobacter violaceus PCC 7421, a cyanobacterium that lacks thylakoids.</title>
        <authorList>
            <person name="Nakamura Y."/>
            <person name="Kaneko T."/>
            <person name="Sato S."/>
            <person name="Mimuro M."/>
            <person name="Miyashita H."/>
            <person name="Tsuchiya T."/>
            <person name="Sasamoto S."/>
            <person name="Watanabe A."/>
            <person name="Kawashima K."/>
            <person name="Kishida Y."/>
            <person name="Kiyokawa C."/>
            <person name="Kohara M."/>
            <person name="Matsumoto M."/>
            <person name="Matsuno A."/>
            <person name="Nakazaki N."/>
            <person name="Shimpo S."/>
            <person name="Takeuchi C."/>
            <person name="Yamada M."/>
            <person name="Tabata S."/>
        </authorList>
    </citation>
    <scope>NUCLEOTIDE SEQUENCE [LARGE SCALE GENOMIC DNA]</scope>
    <source>
        <strain>ATCC 29082 / PCC 7421</strain>
    </source>
</reference>